<name>BUD22_SCHPO</name>
<reference key="1">
    <citation type="journal article" date="2002" name="Nature">
        <title>The genome sequence of Schizosaccharomyces pombe.</title>
        <authorList>
            <person name="Wood V."/>
            <person name="Gwilliam R."/>
            <person name="Rajandream M.A."/>
            <person name="Lyne M.H."/>
            <person name="Lyne R."/>
            <person name="Stewart A."/>
            <person name="Sgouros J.G."/>
            <person name="Peat N."/>
            <person name="Hayles J."/>
            <person name="Baker S.G."/>
            <person name="Basham D."/>
            <person name="Bowman S."/>
            <person name="Brooks K."/>
            <person name="Brown D."/>
            <person name="Brown S."/>
            <person name="Chillingworth T."/>
            <person name="Churcher C.M."/>
            <person name="Collins M."/>
            <person name="Connor R."/>
            <person name="Cronin A."/>
            <person name="Davis P."/>
            <person name="Feltwell T."/>
            <person name="Fraser A."/>
            <person name="Gentles S."/>
            <person name="Goble A."/>
            <person name="Hamlin N."/>
            <person name="Harris D.E."/>
            <person name="Hidalgo J."/>
            <person name="Hodgson G."/>
            <person name="Holroyd S."/>
            <person name="Hornsby T."/>
            <person name="Howarth S."/>
            <person name="Huckle E.J."/>
            <person name="Hunt S."/>
            <person name="Jagels K."/>
            <person name="James K.D."/>
            <person name="Jones L."/>
            <person name="Jones M."/>
            <person name="Leather S."/>
            <person name="McDonald S."/>
            <person name="McLean J."/>
            <person name="Mooney P."/>
            <person name="Moule S."/>
            <person name="Mungall K.L."/>
            <person name="Murphy L.D."/>
            <person name="Niblett D."/>
            <person name="Odell C."/>
            <person name="Oliver K."/>
            <person name="O'Neil S."/>
            <person name="Pearson D."/>
            <person name="Quail M.A."/>
            <person name="Rabbinowitsch E."/>
            <person name="Rutherford K.M."/>
            <person name="Rutter S."/>
            <person name="Saunders D."/>
            <person name="Seeger K."/>
            <person name="Sharp S."/>
            <person name="Skelton J."/>
            <person name="Simmonds M.N."/>
            <person name="Squares R."/>
            <person name="Squares S."/>
            <person name="Stevens K."/>
            <person name="Taylor K."/>
            <person name="Taylor R.G."/>
            <person name="Tivey A."/>
            <person name="Walsh S.V."/>
            <person name="Warren T."/>
            <person name="Whitehead S."/>
            <person name="Woodward J.R."/>
            <person name="Volckaert G."/>
            <person name="Aert R."/>
            <person name="Robben J."/>
            <person name="Grymonprez B."/>
            <person name="Weltjens I."/>
            <person name="Vanstreels E."/>
            <person name="Rieger M."/>
            <person name="Schaefer M."/>
            <person name="Mueller-Auer S."/>
            <person name="Gabel C."/>
            <person name="Fuchs M."/>
            <person name="Duesterhoeft A."/>
            <person name="Fritzc C."/>
            <person name="Holzer E."/>
            <person name="Moestl D."/>
            <person name="Hilbert H."/>
            <person name="Borzym K."/>
            <person name="Langer I."/>
            <person name="Beck A."/>
            <person name="Lehrach H."/>
            <person name="Reinhardt R."/>
            <person name="Pohl T.M."/>
            <person name="Eger P."/>
            <person name="Zimmermann W."/>
            <person name="Wedler H."/>
            <person name="Wambutt R."/>
            <person name="Purnelle B."/>
            <person name="Goffeau A."/>
            <person name="Cadieu E."/>
            <person name="Dreano S."/>
            <person name="Gloux S."/>
            <person name="Lelaure V."/>
            <person name="Mottier S."/>
            <person name="Galibert F."/>
            <person name="Aves S.J."/>
            <person name="Xiang Z."/>
            <person name="Hunt C."/>
            <person name="Moore K."/>
            <person name="Hurst S.M."/>
            <person name="Lucas M."/>
            <person name="Rochet M."/>
            <person name="Gaillardin C."/>
            <person name="Tallada V.A."/>
            <person name="Garzon A."/>
            <person name="Thode G."/>
            <person name="Daga R.R."/>
            <person name="Cruzado L."/>
            <person name="Jimenez J."/>
            <person name="Sanchez M."/>
            <person name="del Rey F."/>
            <person name="Benito J."/>
            <person name="Dominguez A."/>
            <person name="Revuelta J.L."/>
            <person name="Moreno S."/>
            <person name="Armstrong J."/>
            <person name="Forsburg S.L."/>
            <person name="Cerutti L."/>
            <person name="Lowe T."/>
            <person name="McCombie W.R."/>
            <person name="Paulsen I."/>
            <person name="Potashkin J."/>
            <person name="Shpakovski G.V."/>
            <person name="Ussery D."/>
            <person name="Barrell B.G."/>
            <person name="Nurse P."/>
        </authorList>
    </citation>
    <scope>NUCLEOTIDE SEQUENCE [LARGE SCALE GENOMIC DNA]</scope>
    <source>
        <strain>972 / ATCC 24843</strain>
    </source>
</reference>
<reference key="2">
    <citation type="journal article" date="2006" name="Nat. Biotechnol.">
        <title>ORFeome cloning and global analysis of protein localization in the fission yeast Schizosaccharomyces pombe.</title>
        <authorList>
            <person name="Matsuyama A."/>
            <person name="Arai R."/>
            <person name="Yashiroda Y."/>
            <person name="Shirai A."/>
            <person name="Kamata A."/>
            <person name="Sekido S."/>
            <person name="Kobayashi Y."/>
            <person name="Hashimoto A."/>
            <person name="Hamamoto M."/>
            <person name="Hiraoka Y."/>
            <person name="Horinouchi S."/>
            <person name="Yoshida M."/>
        </authorList>
    </citation>
    <scope>SUBCELLULAR LOCATION [LARGE SCALE ANALYSIS]</scope>
</reference>
<accession>O36018</accession>
<gene>
    <name type="primary">bud22</name>
    <name type="ORF">SPAC4F10.06</name>
</gene>
<sequence length="388" mass="44884">MVFTSHKGVKRKSHHSQLSVDDVPKKIPLFKKKISQALKKASTFERQKLVRRIKNCRASEDADTLGRFEAEFEFAKQFDFTKFVDYCYYKKILKNKDFRKLLNENLHVDFPADLTEDAQRNTVARILNSKQLSDAIRNINSILEKYLRFLNPDLQELSDKKAVSSTQKPIKTIGKVDLSNKSTSNQDQVDNTHVQNSTDGVNQDTGMILDNTEDKEINKSMSYSMKNEGVKESSLQNATLINRKSIIDDEMLEIPLGKHNNTNLPALTAGFLDPVESDDEFVEKELEEVDIPKRKNRRGQRARQAIWEKKYGKGANHLIKKATEERSIREERQRKYEERQAKRAARENAFTEHQTPQKPEQLHPSWEAKRKQKMPSSAAFQGKKIVFD</sequence>
<protein>
    <recommendedName>
        <fullName>Protein bud22</fullName>
    </recommendedName>
</protein>
<comment type="subcellular location">
    <subcellularLocation>
        <location evidence="3">Nucleus</location>
        <location evidence="3">Nucleolus</location>
    </subcellularLocation>
</comment>
<comment type="similarity">
    <text evidence="4">Belongs to the BUD22 family.</text>
</comment>
<keyword id="KW-0175">Coiled coil</keyword>
<keyword id="KW-0539">Nucleus</keyword>
<keyword id="KW-1185">Reference proteome</keyword>
<feature type="chain" id="PRO_0000373991" description="Protein bud22">
    <location>
        <begin position="1"/>
        <end position="388"/>
    </location>
</feature>
<feature type="region of interest" description="Disordered" evidence="2">
    <location>
        <begin position="174"/>
        <end position="206"/>
    </location>
</feature>
<feature type="region of interest" description="Disordered" evidence="2">
    <location>
        <begin position="318"/>
        <end position="388"/>
    </location>
</feature>
<feature type="coiled-coil region" evidence="1">
    <location>
        <begin position="319"/>
        <end position="349"/>
    </location>
</feature>
<feature type="compositionally biased region" description="Polar residues" evidence="2">
    <location>
        <begin position="179"/>
        <end position="205"/>
    </location>
</feature>
<feature type="compositionally biased region" description="Basic and acidic residues" evidence="2">
    <location>
        <begin position="321"/>
        <end position="350"/>
    </location>
</feature>
<proteinExistence type="inferred from homology"/>
<organism>
    <name type="scientific">Schizosaccharomyces pombe (strain 972 / ATCC 24843)</name>
    <name type="common">Fission yeast</name>
    <dbReference type="NCBI Taxonomy" id="284812"/>
    <lineage>
        <taxon>Eukaryota</taxon>
        <taxon>Fungi</taxon>
        <taxon>Dikarya</taxon>
        <taxon>Ascomycota</taxon>
        <taxon>Taphrinomycotina</taxon>
        <taxon>Schizosaccharomycetes</taxon>
        <taxon>Schizosaccharomycetales</taxon>
        <taxon>Schizosaccharomycetaceae</taxon>
        <taxon>Schizosaccharomyces</taxon>
    </lineage>
</organism>
<evidence type="ECO:0000255" key="1"/>
<evidence type="ECO:0000256" key="2">
    <source>
        <dbReference type="SAM" id="MobiDB-lite"/>
    </source>
</evidence>
<evidence type="ECO:0000269" key="3">
    <source>
    </source>
</evidence>
<evidence type="ECO:0000305" key="4"/>
<dbReference type="EMBL" id="CU329670">
    <property type="protein sequence ID" value="CAB11709.1"/>
    <property type="molecule type" value="Genomic_DNA"/>
</dbReference>
<dbReference type="PIR" id="T38810">
    <property type="entry name" value="T38810"/>
</dbReference>
<dbReference type="RefSeq" id="NP_594749.1">
    <property type="nucleotide sequence ID" value="NM_001020176.2"/>
</dbReference>
<dbReference type="BioGRID" id="279989">
    <property type="interactions" value="3"/>
</dbReference>
<dbReference type="FunCoup" id="O36018">
    <property type="interactions" value="174"/>
</dbReference>
<dbReference type="STRING" id="284812.O36018"/>
<dbReference type="iPTMnet" id="O36018"/>
<dbReference type="PaxDb" id="4896-SPAC4F10.06.1"/>
<dbReference type="EnsemblFungi" id="SPAC4F10.06.1">
    <property type="protein sequence ID" value="SPAC4F10.06.1:pep"/>
    <property type="gene ID" value="SPAC4F10.06"/>
</dbReference>
<dbReference type="GeneID" id="2543574"/>
<dbReference type="KEGG" id="spo:2543574"/>
<dbReference type="PomBase" id="SPAC4F10.06">
    <property type="gene designation" value="bud22"/>
</dbReference>
<dbReference type="VEuPathDB" id="FungiDB:SPAC4F10.06"/>
<dbReference type="eggNOG" id="ENOG502S6Z4">
    <property type="taxonomic scope" value="Eukaryota"/>
</dbReference>
<dbReference type="HOGENOM" id="CLU_029647_1_0_1"/>
<dbReference type="InParanoid" id="O36018"/>
<dbReference type="OMA" id="ALWEKKF"/>
<dbReference type="PhylomeDB" id="O36018"/>
<dbReference type="PRO" id="PR:O36018"/>
<dbReference type="Proteomes" id="UP000002485">
    <property type="component" value="Chromosome I"/>
</dbReference>
<dbReference type="GO" id="GO:0030686">
    <property type="term" value="C:90S preribosome"/>
    <property type="evidence" value="ECO:0000318"/>
    <property type="project" value="GO_Central"/>
</dbReference>
<dbReference type="GO" id="GO:0005730">
    <property type="term" value="C:nucleolus"/>
    <property type="evidence" value="ECO:0007005"/>
    <property type="project" value="PomBase"/>
</dbReference>
<dbReference type="GO" id="GO:0005634">
    <property type="term" value="C:nucleus"/>
    <property type="evidence" value="ECO:0000318"/>
    <property type="project" value="GO_Central"/>
</dbReference>
<dbReference type="GO" id="GO:0030490">
    <property type="term" value="P:maturation of SSU-rRNA"/>
    <property type="evidence" value="ECO:0000318"/>
    <property type="project" value="GO_Central"/>
</dbReference>
<dbReference type="InterPro" id="IPR037393">
    <property type="entry name" value="Bud22/SRFB1"/>
</dbReference>
<dbReference type="InterPro" id="IPR015158">
    <property type="entry name" value="Bud22_dom"/>
</dbReference>
<dbReference type="PANTHER" id="PTHR23325">
    <property type="entry name" value="SERUM RESPONSE FACTOR-BINDING"/>
    <property type="match status" value="1"/>
</dbReference>
<dbReference type="PANTHER" id="PTHR23325:SF1">
    <property type="entry name" value="SERUM RESPONSE FACTOR-BINDING PROTEIN 1"/>
    <property type="match status" value="1"/>
</dbReference>
<dbReference type="Pfam" id="PF09073">
    <property type="entry name" value="BUD22"/>
    <property type="match status" value="1"/>
</dbReference>